<proteinExistence type="evidence at protein level"/>
<gene>
    <name type="primary">TMEM185A</name>
    <name type="synonym">CXorf13</name>
    <name type="synonym">FAM11A</name>
</gene>
<feature type="chain" id="PRO_0000188007" description="Transmembrane protein 185A">
    <location>
        <begin position="1"/>
        <end position="350"/>
    </location>
</feature>
<feature type="transmembrane region" description="Helical" evidence="2">
    <location>
        <begin position="16"/>
        <end position="36"/>
    </location>
</feature>
<feature type="transmembrane region" description="Helical" evidence="2">
    <location>
        <begin position="41"/>
        <end position="61"/>
    </location>
</feature>
<feature type="transmembrane region" description="Helical" evidence="2">
    <location>
        <begin position="81"/>
        <end position="101"/>
    </location>
</feature>
<feature type="transmembrane region" description="Helical" evidence="2">
    <location>
        <begin position="111"/>
        <end position="131"/>
    </location>
</feature>
<feature type="transmembrane region" description="Helical" evidence="2">
    <location>
        <begin position="177"/>
        <end position="197"/>
    </location>
</feature>
<feature type="transmembrane region" description="Helical" evidence="2">
    <location>
        <begin position="211"/>
        <end position="231"/>
    </location>
</feature>
<feature type="transmembrane region" description="Helical" evidence="2">
    <location>
        <begin position="240"/>
        <end position="260"/>
    </location>
</feature>
<feature type="region of interest" description="Mediates interaction with MAP1B" evidence="3">
    <location>
        <begin position="298"/>
        <end position="350"/>
    </location>
</feature>
<feature type="sequence variant" id="VAR_033922" description="In dbSNP:rs1398828734.">
    <original>M</original>
    <variation>V</variation>
    <location>
        <position position="179"/>
    </location>
</feature>
<feature type="sequence variant" id="VAR_033923" description="In dbSNP:rs200553350.">
    <original>C</original>
    <variation>S</variation>
    <location>
        <position position="243"/>
    </location>
</feature>
<reference key="1">
    <citation type="journal article" date="2002" name="Eur. J. Hum. Genet.">
        <title>A novel gene, FAM11A, associated with the FRAXF CpG island is transcriptionally silent in FRAXF full mutation.</title>
        <authorList>
            <person name="Shaw M.A."/>
            <person name="Chiurazzi P."/>
            <person name="Romain D.R."/>
            <person name="Neri G."/>
            <person name="Gecz J."/>
        </authorList>
    </citation>
    <scope>NUCLEOTIDE SEQUENCE [MRNA]</scope>
</reference>
<reference key="2">
    <citation type="journal article" date="2004" name="Nat. Genet.">
        <title>Complete sequencing and characterization of 21,243 full-length human cDNAs.</title>
        <authorList>
            <person name="Ota T."/>
            <person name="Suzuki Y."/>
            <person name="Nishikawa T."/>
            <person name="Otsuki T."/>
            <person name="Sugiyama T."/>
            <person name="Irie R."/>
            <person name="Wakamatsu A."/>
            <person name="Hayashi K."/>
            <person name="Sato H."/>
            <person name="Nagai K."/>
            <person name="Kimura K."/>
            <person name="Makita H."/>
            <person name="Sekine M."/>
            <person name="Obayashi M."/>
            <person name="Nishi T."/>
            <person name="Shibahara T."/>
            <person name="Tanaka T."/>
            <person name="Ishii S."/>
            <person name="Yamamoto J."/>
            <person name="Saito K."/>
            <person name="Kawai Y."/>
            <person name="Isono Y."/>
            <person name="Nakamura Y."/>
            <person name="Nagahari K."/>
            <person name="Murakami K."/>
            <person name="Yasuda T."/>
            <person name="Iwayanagi T."/>
            <person name="Wagatsuma M."/>
            <person name="Shiratori A."/>
            <person name="Sudo H."/>
            <person name="Hosoiri T."/>
            <person name="Kaku Y."/>
            <person name="Kodaira H."/>
            <person name="Kondo H."/>
            <person name="Sugawara M."/>
            <person name="Takahashi M."/>
            <person name="Kanda K."/>
            <person name="Yokoi T."/>
            <person name="Furuya T."/>
            <person name="Kikkawa E."/>
            <person name="Omura Y."/>
            <person name="Abe K."/>
            <person name="Kamihara K."/>
            <person name="Katsuta N."/>
            <person name="Sato K."/>
            <person name="Tanikawa M."/>
            <person name="Yamazaki M."/>
            <person name="Ninomiya K."/>
            <person name="Ishibashi T."/>
            <person name="Yamashita H."/>
            <person name="Murakawa K."/>
            <person name="Fujimori K."/>
            <person name="Tanai H."/>
            <person name="Kimata M."/>
            <person name="Watanabe M."/>
            <person name="Hiraoka S."/>
            <person name="Chiba Y."/>
            <person name="Ishida S."/>
            <person name="Ono Y."/>
            <person name="Takiguchi S."/>
            <person name="Watanabe S."/>
            <person name="Yosida M."/>
            <person name="Hotuta T."/>
            <person name="Kusano J."/>
            <person name="Kanehori K."/>
            <person name="Takahashi-Fujii A."/>
            <person name="Hara H."/>
            <person name="Tanase T.-O."/>
            <person name="Nomura Y."/>
            <person name="Togiya S."/>
            <person name="Komai F."/>
            <person name="Hara R."/>
            <person name="Takeuchi K."/>
            <person name="Arita M."/>
            <person name="Imose N."/>
            <person name="Musashino K."/>
            <person name="Yuuki H."/>
            <person name="Oshima A."/>
            <person name="Sasaki N."/>
            <person name="Aotsuka S."/>
            <person name="Yoshikawa Y."/>
            <person name="Matsunawa H."/>
            <person name="Ichihara T."/>
            <person name="Shiohata N."/>
            <person name="Sano S."/>
            <person name="Moriya S."/>
            <person name="Momiyama H."/>
            <person name="Satoh N."/>
            <person name="Takami S."/>
            <person name="Terashima Y."/>
            <person name="Suzuki O."/>
            <person name="Nakagawa S."/>
            <person name="Senoh A."/>
            <person name="Mizoguchi H."/>
            <person name="Goto Y."/>
            <person name="Shimizu F."/>
            <person name="Wakebe H."/>
            <person name="Hishigaki H."/>
            <person name="Watanabe T."/>
            <person name="Sugiyama A."/>
            <person name="Takemoto M."/>
            <person name="Kawakami B."/>
            <person name="Yamazaki M."/>
            <person name="Watanabe K."/>
            <person name="Kumagai A."/>
            <person name="Itakura S."/>
            <person name="Fukuzumi Y."/>
            <person name="Fujimori Y."/>
            <person name="Komiyama M."/>
            <person name="Tashiro H."/>
            <person name="Tanigami A."/>
            <person name="Fujiwara T."/>
            <person name="Ono T."/>
            <person name="Yamada K."/>
            <person name="Fujii Y."/>
            <person name="Ozaki K."/>
            <person name="Hirao M."/>
            <person name="Ohmori Y."/>
            <person name="Kawabata A."/>
            <person name="Hikiji T."/>
            <person name="Kobatake N."/>
            <person name="Inagaki H."/>
            <person name="Ikema Y."/>
            <person name="Okamoto S."/>
            <person name="Okitani R."/>
            <person name="Kawakami T."/>
            <person name="Noguchi S."/>
            <person name="Itoh T."/>
            <person name="Shigeta K."/>
            <person name="Senba T."/>
            <person name="Matsumura K."/>
            <person name="Nakajima Y."/>
            <person name="Mizuno T."/>
            <person name="Morinaga M."/>
            <person name="Sasaki M."/>
            <person name="Togashi T."/>
            <person name="Oyama M."/>
            <person name="Hata H."/>
            <person name="Watanabe M."/>
            <person name="Komatsu T."/>
            <person name="Mizushima-Sugano J."/>
            <person name="Satoh T."/>
            <person name="Shirai Y."/>
            <person name="Takahashi Y."/>
            <person name="Nakagawa K."/>
            <person name="Okumura K."/>
            <person name="Nagase T."/>
            <person name="Nomura N."/>
            <person name="Kikuchi H."/>
            <person name="Masuho Y."/>
            <person name="Yamashita R."/>
            <person name="Nakai K."/>
            <person name="Yada T."/>
            <person name="Nakamura Y."/>
            <person name="Ohara O."/>
            <person name="Isogai T."/>
            <person name="Sugano S."/>
        </authorList>
    </citation>
    <scope>NUCLEOTIDE SEQUENCE [LARGE SCALE MRNA]</scope>
    <source>
        <tissue>Testis</tissue>
    </source>
</reference>
<reference key="3">
    <citation type="journal article" date="2005" name="Nature">
        <title>The DNA sequence of the human X chromosome.</title>
        <authorList>
            <person name="Ross M.T."/>
            <person name="Grafham D.V."/>
            <person name="Coffey A.J."/>
            <person name="Scherer S."/>
            <person name="McLay K."/>
            <person name="Muzny D."/>
            <person name="Platzer M."/>
            <person name="Howell G.R."/>
            <person name="Burrows C."/>
            <person name="Bird C.P."/>
            <person name="Frankish A."/>
            <person name="Lovell F.L."/>
            <person name="Howe K.L."/>
            <person name="Ashurst J.L."/>
            <person name="Fulton R.S."/>
            <person name="Sudbrak R."/>
            <person name="Wen G."/>
            <person name="Jones M.C."/>
            <person name="Hurles M.E."/>
            <person name="Andrews T.D."/>
            <person name="Scott C.E."/>
            <person name="Searle S."/>
            <person name="Ramser J."/>
            <person name="Whittaker A."/>
            <person name="Deadman R."/>
            <person name="Carter N.P."/>
            <person name="Hunt S.E."/>
            <person name="Chen R."/>
            <person name="Cree A."/>
            <person name="Gunaratne P."/>
            <person name="Havlak P."/>
            <person name="Hodgson A."/>
            <person name="Metzker M.L."/>
            <person name="Richards S."/>
            <person name="Scott G."/>
            <person name="Steffen D."/>
            <person name="Sodergren E."/>
            <person name="Wheeler D.A."/>
            <person name="Worley K.C."/>
            <person name="Ainscough R."/>
            <person name="Ambrose K.D."/>
            <person name="Ansari-Lari M.A."/>
            <person name="Aradhya S."/>
            <person name="Ashwell R.I."/>
            <person name="Babbage A.K."/>
            <person name="Bagguley C.L."/>
            <person name="Ballabio A."/>
            <person name="Banerjee R."/>
            <person name="Barker G.E."/>
            <person name="Barlow K.F."/>
            <person name="Barrett I.P."/>
            <person name="Bates K.N."/>
            <person name="Beare D.M."/>
            <person name="Beasley H."/>
            <person name="Beasley O."/>
            <person name="Beck A."/>
            <person name="Bethel G."/>
            <person name="Blechschmidt K."/>
            <person name="Brady N."/>
            <person name="Bray-Allen S."/>
            <person name="Bridgeman A.M."/>
            <person name="Brown A.J."/>
            <person name="Brown M.J."/>
            <person name="Bonnin D."/>
            <person name="Bruford E.A."/>
            <person name="Buhay C."/>
            <person name="Burch P."/>
            <person name="Burford D."/>
            <person name="Burgess J."/>
            <person name="Burrill W."/>
            <person name="Burton J."/>
            <person name="Bye J.M."/>
            <person name="Carder C."/>
            <person name="Carrel L."/>
            <person name="Chako J."/>
            <person name="Chapman J.C."/>
            <person name="Chavez D."/>
            <person name="Chen E."/>
            <person name="Chen G."/>
            <person name="Chen Y."/>
            <person name="Chen Z."/>
            <person name="Chinault C."/>
            <person name="Ciccodicola A."/>
            <person name="Clark S.Y."/>
            <person name="Clarke G."/>
            <person name="Clee C.M."/>
            <person name="Clegg S."/>
            <person name="Clerc-Blankenburg K."/>
            <person name="Clifford K."/>
            <person name="Cobley V."/>
            <person name="Cole C.G."/>
            <person name="Conquer J.S."/>
            <person name="Corby N."/>
            <person name="Connor R.E."/>
            <person name="David R."/>
            <person name="Davies J."/>
            <person name="Davis C."/>
            <person name="Davis J."/>
            <person name="Delgado O."/>
            <person name="Deshazo D."/>
            <person name="Dhami P."/>
            <person name="Ding Y."/>
            <person name="Dinh H."/>
            <person name="Dodsworth S."/>
            <person name="Draper H."/>
            <person name="Dugan-Rocha S."/>
            <person name="Dunham A."/>
            <person name="Dunn M."/>
            <person name="Durbin K.J."/>
            <person name="Dutta I."/>
            <person name="Eades T."/>
            <person name="Ellwood M."/>
            <person name="Emery-Cohen A."/>
            <person name="Errington H."/>
            <person name="Evans K.L."/>
            <person name="Faulkner L."/>
            <person name="Francis F."/>
            <person name="Frankland J."/>
            <person name="Fraser A.E."/>
            <person name="Galgoczy P."/>
            <person name="Gilbert J."/>
            <person name="Gill R."/>
            <person name="Gloeckner G."/>
            <person name="Gregory S.G."/>
            <person name="Gribble S."/>
            <person name="Griffiths C."/>
            <person name="Grocock R."/>
            <person name="Gu Y."/>
            <person name="Gwilliam R."/>
            <person name="Hamilton C."/>
            <person name="Hart E.A."/>
            <person name="Hawes A."/>
            <person name="Heath P.D."/>
            <person name="Heitmann K."/>
            <person name="Hennig S."/>
            <person name="Hernandez J."/>
            <person name="Hinzmann B."/>
            <person name="Ho S."/>
            <person name="Hoffs M."/>
            <person name="Howden P.J."/>
            <person name="Huckle E.J."/>
            <person name="Hume J."/>
            <person name="Hunt P.J."/>
            <person name="Hunt A.R."/>
            <person name="Isherwood J."/>
            <person name="Jacob L."/>
            <person name="Johnson D."/>
            <person name="Jones S."/>
            <person name="de Jong P.J."/>
            <person name="Joseph S.S."/>
            <person name="Keenan S."/>
            <person name="Kelly S."/>
            <person name="Kershaw J.K."/>
            <person name="Khan Z."/>
            <person name="Kioschis P."/>
            <person name="Klages S."/>
            <person name="Knights A.J."/>
            <person name="Kosiura A."/>
            <person name="Kovar-Smith C."/>
            <person name="Laird G.K."/>
            <person name="Langford C."/>
            <person name="Lawlor S."/>
            <person name="Leversha M."/>
            <person name="Lewis L."/>
            <person name="Liu W."/>
            <person name="Lloyd C."/>
            <person name="Lloyd D.M."/>
            <person name="Loulseged H."/>
            <person name="Loveland J.E."/>
            <person name="Lovell J.D."/>
            <person name="Lozado R."/>
            <person name="Lu J."/>
            <person name="Lyne R."/>
            <person name="Ma J."/>
            <person name="Maheshwari M."/>
            <person name="Matthews L.H."/>
            <person name="McDowall J."/>
            <person name="McLaren S."/>
            <person name="McMurray A."/>
            <person name="Meidl P."/>
            <person name="Meitinger T."/>
            <person name="Milne S."/>
            <person name="Miner G."/>
            <person name="Mistry S.L."/>
            <person name="Morgan M."/>
            <person name="Morris S."/>
            <person name="Mueller I."/>
            <person name="Mullikin J.C."/>
            <person name="Nguyen N."/>
            <person name="Nordsiek G."/>
            <person name="Nyakatura G."/>
            <person name="O'dell C.N."/>
            <person name="Okwuonu G."/>
            <person name="Palmer S."/>
            <person name="Pandian R."/>
            <person name="Parker D."/>
            <person name="Parrish J."/>
            <person name="Pasternak S."/>
            <person name="Patel D."/>
            <person name="Pearce A.V."/>
            <person name="Pearson D.M."/>
            <person name="Pelan S.E."/>
            <person name="Perez L."/>
            <person name="Porter K.M."/>
            <person name="Ramsey Y."/>
            <person name="Reichwald K."/>
            <person name="Rhodes S."/>
            <person name="Ridler K.A."/>
            <person name="Schlessinger D."/>
            <person name="Schueler M.G."/>
            <person name="Sehra H.K."/>
            <person name="Shaw-Smith C."/>
            <person name="Shen H."/>
            <person name="Sheridan E.M."/>
            <person name="Shownkeen R."/>
            <person name="Skuce C.D."/>
            <person name="Smith M.L."/>
            <person name="Sotheran E.C."/>
            <person name="Steingruber H.E."/>
            <person name="Steward C.A."/>
            <person name="Storey R."/>
            <person name="Swann R.M."/>
            <person name="Swarbreck D."/>
            <person name="Tabor P.E."/>
            <person name="Taudien S."/>
            <person name="Taylor T."/>
            <person name="Teague B."/>
            <person name="Thomas K."/>
            <person name="Thorpe A."/>
            <person name="Timms K."/>
            <person name="Tracey A."/>
            <person name="Trevanion S."/>
            <person name="Tromans A.C."/>
            <person name="d'Urso M."/>
            <person name="Verduzco D."/>
            <person name="Villasana D."/>
            <person name="Waldron L."/>
            <person name="Wall M."/>
            <person name="Wang Q."/>
            <person name="Warren J."/>
            <person name="Warry G.L."/>
            <person name="Wei X."/>
            <person name="West A."/>
            <person name="Whitehead S.L."/>
            <person name="Whiteley M.N."/>
            <person name="Wilkinson J.E."/>
            <person name="Willey D.L."/>
            <person name="Williams G."/>
            <person name="Williams L."/>
            <person name="Williamson A."/>
            <person name="Williamson H."/>
            <person name="Wilming L."/>
            <person name="Woodmansey R.L."/>
            <person name="Wray P.W."/>
            <person name="Yen J."/>
            <person name="Zhang J."/>
            <person name="Zhou J."/>
            <person name="Zoghbi H."/>
            <person name="Zorilla S."/>
            <person name="Buck D."/>
            <person name="Reinhardt R."/>
            <person name="Poustka A."/>
            <person name="Rosenthal A."/>
            <person name="Lehrach H."/>
            <person name="Meindl A."/>
            <person name="Minx P.J."/>
            <person name="Hillier L.W."/>
            <person name="Willard H.F."/>
            <person name="Wilson R.K."/>
            <person name="Waterston R.H."/>
            <person name="Rice C.M."/>
            <person name="Vaudin M."/>
            <person name="Coulson A."/>
            <person name="Nelson D.L."/>
            <person name="Weinstock G."/>
            <person name="Sulston J.E."/>
            <person name="Durbin R.M."/>
            <person name="Hubbard T."/>
            <person name="Gibbs R.A."/>
            <person name="Beck S."/>
            <person name="Rogers J."/>
            <person name="Bentley D.R."/>
        </authorList>
    </citation>
    <scope>NUCLEOTIDE SEQUENCE [LARGE SCALE GENOMIC DNA]</scope>
</reference>
<reference key="4">
    <citation type="submission" date="2005-07" db="EMBL/GenBank/DDBJ databases">
        <authorList>
            <person name="Mural R.J."/>
            <person name="Istrail S."/>
            <person name="Sutton G.G."/>
            <person name="Florea L."/>
            <person name="Halpern A.L."/>
            <person name="Mobarry C.M."/>
            <person name="Lippert R."/>
            <person name="Walenz B."/>
            <person name="Shatkay H."/>
            <person name="Dew I."/>
            <person name="Miller J.R."/>
            <person name="Flanigan M.J."/>
            <person name="Edwards N.J."/>
            <person name="Bolanos R."/>
            <person name="Fasulo D."/>
            <person name="Halldorsson B.V."/>
            <person name="Hannenhalli S."/>
            <person name="Turner R."/>
            <person name="Yooseph S."/>
            <person name="Lu F."/>
            <person name="Nusskern D.R."/>
            <person name="Shue B.C."/>
            <person name="Zheng X.H."/>
            <person name="Zhong F."/>
            <person name="Delcher A.L."/>
            <person name="Huson D.H."/>
            <person name="Kravitz S.A."/>
            <person name="Mouchard L."/>
            <person name="Reinert K."/>
            <person name="Remington K.A."/>
            <person name="Clark A.G."/>
            <person name="Waterman M.S."/>
            <person name="Eichler E.E."/>
            <person name="Adams M.D."/>
            <person name="Hunkapiller M.W."/>
            <person name="Myers E.W."/>
            <person name="Venter J.C."/>
        </authorList>
    </citation>
    <scope>NUCLEOTIDE SEQUENCE [LARGE SCALE GENOMIC DNA]</scope>
</reference>
<reference key="5">
    <citation type="journal article" date="2004" name="Genome Res.">
        <title>The status, quality, and expansion of the NIH full-length cDNA project: the Mammalian Gene Collection (MGC).</title>
        <authorList>
            <consortium name="The MGC Project Team"/>
        </authorList>
    </citation>
    <scope>NUCLEOTIDE SEQUENCE [LARGE SCALE MRNA]</scope>
    <source>
        <tissue>Brain</tissue>
    </source>
</reference>
<reference key="6">
    <citation type="submission" date="2001-02" db="EMBL/GenBank/DDBJ databases">
        <title>Novel iris cDNA from Xq28.</title>
        <authorList>
            <person name="Wistow G."/>
        </authorList>
    </citation>
    <scope>NUCLEOTIDE SEQUENCE [MRNA] OF 148-350</scope>
    <source>
        <tissue>Iris</tissue>
    </source>
</reference>
<reference key="7">
    <citation type="journal article" date="2004" name="J. Neurochem.">
        <title>Cloning of a novel neuronally expressed orphan G-protein-coupled receptor which is up-regulated by erythropoietin, interacts with microtubule-associated protein 1b and colocalizes with the 5-hydroxytryptamine 2a receptor.</title>
        <authorList>
            <person name="Maurer M.H."/>
            <person name="Gruenewald S."/>
            <person name="Gassler N."/>
            <person name="Rossner M."/>
            <person name="Propst F."/>
            <person name="Wuerz R."/>
            <person name="Weber D."/>
            <person name="Kuner T."/>
            <person name="Kuschinsky W."/>
            <person name="Schneider A."/>
        </authorList>
    </citation>
    <scope>INTERACTION WITH MAP1B</scope>
</reference>
<comment type="subunit">
    <text evidence="3">Interacts with MAP1B.</text>
</comment>
<comment type="interaction">
    <interactant intactId="EBI-21757569">
        <id>Q8NFB2</id>
    </interactant>
    <interactant intactId="EBI-751728">
        <id>P01019</id>
        <label>AGT</label>
    </interactant>
    <organismsDiffer>false</organismsDiffer>
    <experiments>3</experiments>
</comment>
<comment type="interaction">
    <interactant intactId="EBI-21757569">
        <id>Q8NFB2</id>
    </interactant>
    <interactant intactId="EBI-852851">
        <id>P01100</id>
        <label>FOS</label>
    </interactant>
    <organismsDiffer>false</organismsDiffer>
    <experiments>3</experiments>
</comment>
<comment type="interaction">
    <interactant intactId="EBI-21757569">
        <id>Q8NFB2</id>
    </interactant>
    <interactant intactId="EBI-2552594">
        <id>P50440</id>
        <label>GATM</label>
    </interactant>
    <organismsDiffer>false</organismsDiffer>
    <experiments>3</experiments>
</comment>
<comment type="interaction">
    <interactant intactId="EBI-21757569">
        <id>Q8NFB2</id>
    </interactant>
    <interactant intactId="EBI-401755">
        <id>P62993</id>
        <label>GRB2</label>
    </interactant>
    <organismsDiffer>false</organismsDiffer>
    <experiments>3</experiments>
</comment>
<comment type="interaction">
    <interactant intactId="EBI-21757569">
        <id>Q8NFB2</id>
    </interactant>
    <interactant intactId="EBI-719620">
        <id>Q00613</id>
        <label>HSF1</label>
    </interactant>
    <organismsDiffer>false</organismsDiffer>
    <experiments>3</experiments>
</comment>
<comment type="interaction">
    <interactant intactId="EBI-21757569">
        <id>Q8NFB2</id>
    </interactant>
    <interactant intactId="EBI-10087153">
        <id>P03952</id>
        <label>KLKB1</label>
    </interactant>
    <organismsDiffer>false</organismsDiffer>
    <experiments>3</experiments>
</comment>
<comment type="interaction">
    <interactant intactId="EBI-21757569">
        <id>Q8NFB2</id>
    </interactant>
    <interactant intactId="EBI-715909">
        <id>P06858</id>
        <label>LPL</label>
    </interactant>
    <organismsDiffer>false</organismsDiffer>
    <experiments>3</experiments>
</comment>
<comment type="interaction">
    <interactant intactId="EBI-21757569">
        <id>Q8NFB2</id>
    </interactant>
    <interactant intactId="EBI-1246371">
        <id>O96000</id>
        <label>NDUFB10</label>
    </interactant>
    <organismsDiffer>false</organismsDiffer>
    <experiments>3</experiments>
</comment>
<comment type="interaction">
    <interactant intactId="EBI-21757569">
        <id>Q8NFB2</id>
    </interactant>
    <interactant intactId="EBI-12157263">
        <id>P40337-2</id>
        <label>VHL</label>
    </interactant>
    <organismsDiffer>false</organismsDiffer>
    <experiments>3</experiments>
</comment>
<comment type="subcellular location">
    <subcellularLocation>
        <location evidence="1">Cell projection</location>
        <location evidence="1">Dendrite</location>
    </subcellularLocation>
    <subcellularLocation>
        <location evidence="4">Membrane</location>
        <topology evidence="4">Multi-pass membrane protein</topology>
    </subcellularLocation>
</comment>
<comment type="similarity">
    <text evidence="4">Belongs to the TMEM185 family.</text>
</comment>
<comment type="sequence caution" evidence="4">
    <conflict type="erroneous initiation">
        <sequence resource="EMBL-CDS" id="AAH13793"/>
    </conflict>
    <text>Truncated N-terminus.</text>
</comment>
<organism>
    <name type="scientific">Homo sapiens</name>
    <name type="common">Human</name>
    <dbReference type="NCBI Taxonomy" id="9606"/>
    <lineage>
        <taxon>Eukaryota</taxon>
        <taxon>Metazoa</taxon>
        <taxon>Chordata</taxon>
        <taxon>Craniata</taxon>
        <taxon>Vertebrata</taxon>
        <taxon>Euteleostomi</taxon>
        <taxon>Mammalia</taxon>
        <taxon>Eutheria</taxon>
        <taxon>Euarchontoglires</taxon>
        <taxon>Primates</taxon>
        <taxon>Haplorrhini</taxon>
        <taxon>Catarrhini</taxon>
        <taxon>Hominidae</taxon>
        <taxon>Homo</taxon>
    </lineage>
</organism>
<protein>
    <recommendedName>
        <fullName>Transmembrane protein 185A</fullName>
    </recommendedName>
    <alternativeName>
        <fullName>Protein FAM11A</fullName>
    </alternativeName>
</protein>
<dbReference type="EMBL" id="AF530473">
    <property type="protein sequence ID" value="AAM94598.1"/>
    <property type="molecule type" value="mRNA"/>
</dbReference>
<dbReference type="EMBL" id="AK096308">
    <property type="protein sequence ID" value="BAG53255.1"/>
    <property type="molecule type" value="mRNA"/>
</dbReference>
<dbReference type="EMBL" id="AK097391">
    <property type="protein sequence ID" value="BAC05031.1"/>
    <property type="molecule type" value="mRNA"/>
</dbReference>
<dbReference type="EMBL" id="AC231844">
    <property type="status" value="NOT_ANNOTATED_CDS"/>
    <property type="molecule type" value="Genomic_DNA"/>
</dbReference>
<dbReference type="EMBL" id="AC233288">
    <property type="status" value="NOT_ANNOTATED_CDS"/>
    <property type="molecule type" value="Genomic_DNA"/>
</dbReference>
<dbReference type="EMBL" id="CH471169">
    <property type="protein sequence ID" value="EAW99368.1"/>
    <property type="molecule type" value="Genomic_DNA"/>
</dbReference>
<dbReference type="EMBL" id="BC013793">
    <property type="protein sequence ID" value="AAH13793.1"/>
    <property type="status" value="ALT_INIT"/>
    <property type="molecule type" value="mRNA"/>
</dbReference>
<dbReference type="EMBL" id="BC103821">
    <property type="protein sequence ID" value="AAI03822.1"/>
    <property type="molecule type" value="mRNA"/>
</dbReference>
<dbReference type="EMBL" id="BC103822">
    <property type="protein sequence ID" value="AAI03823.1"/>
    <property type="molecule type" value="mRNA"/>
</dbReference>
<dbReference type="EMBL" id="AF353675">
    <property type="protein sequence ID" value="AAK39521.1"/>
    <property type="molecule type" value="mRNA"/>
</dbReference>
<dbReference type="CCDS" id="CCDS14689.1"/>
<dbReference type="RefSeq" id="NP_001167563.1">
    <property type="nucleotide sequence ID" value="NM_001174092.2"/>
</dbReference>
<dbReference type="RefSeq" id="NP_001269231.1">
    <property type="nucleotide sequence ID" value="NM_001282302.1"/>
</dbReference>
<dbReference type="RefSeq" id="NP_115897.1">
    <property type="nucleotide sequence ID" value="NM_032508.4"/>
</dbReference>
<dbReference type="BioGRID" id="124133">
    <property type="interactions" value="87"/>
</dbReference>
<dbReference type="FunCoup" id="Q8NFB2">
    <property type="interactions" value="104"/>
</dbReference>
<dbReference type="IntAct" id="Q8NFB2">
    <property type="interactions" value="77"/>
</dbReference>
<dbReference type="STRING" id="9606.ENSP00000471932"/>
<dbReference type="iPTMnet" id="Q8NFB2"/>
<dbReference type="PhosphoSitePlus" id="Q8NFB2"/>
<dbReference type="SwissPalm" id="Q8NFB2"/>
<dbReference type="BioMuta" id="TMEM185A"/>
<dbReference type="DMDM" id="550544296"/>
<dbReference type="jPOST" id="Q8NFB2"/>
<dbReference type="MassIVE" id="Q8NFB2"/>
<dbReference type="PaxDb" id="9606-ENSP00000471932"/>
<dbReference type="PeptideAtlas" id="Q8NFB2"/>
<dbReference type="ProteomicsDB" id="73285"/>
<dbReference type="Antibodypedia" id="74111">
    <property type="antibodies" value="56 antibodies from 17 providers"/>
</dbReference>
<dbReference type="DNASU" id="84548"/>
<dbReference type="Ensembl" id="ENST00000600449.8">
    <property type="protein sequence ID" value="ENSP00000471932.1"/>
    <property type="gene ID" value="ENSG00000269556.9"/>
</dbReference>
<dbReference type="GeneID" id="84548"/>
<dbReference type="KEGG" id="hsa:84548"/>
<dbReference type="MANE-Select" id="ENST00000600449.8">
    <property type="protein sequence ID" value="ENSP00000471932.1"/>
    <property type="RefSeq nucleotide sequence ID" value="NM_032508.4"/>
    <property type="RefSeq protein sequence ID" value="NP_115897.1"/>
</dbReference>
<dbReference type="UCSC" id="uc033ezr.1">
    <property type="organism name" value="human"/>
</dbReference>
<dbReference type="AGR" id="HGNC:17125"/>
<dbReference type="CTD" id="84548"/>
<dbReference type="DisGeNET" id="84548"/>
<dbReference type="GeneCards" id="TMEM185A"/>
<dbReference type="HGNC" id="HGNC:17125">
    <property type="gene designation" value="TMEM185A"/>
</dbReference>
<dbReference type="HPA" id="ENSG00000269556">
    <property type="expression patterns" value="Low tissue specificity"/>
</dbReference>
<dbReference type="MalaCards" id="TMEM185A"/>
<dbReference type="MIM" id="300031">
    <property type="type" value="gene"/>
</dbReference>
<dbReference type="neXtProt" id="NX_Q8NFB2"/>
<dbReference type="OpenTargets" id="ENSG00000269556"/>
<dbReference type="Orphanet" id="100974">
    <property type="disease" value="FRAXF syndrome"/>
</dbReference>
<dbReference type="PharmGKB" id="PA27062"/>
<dbReference type="VEuPathDB" id="HostDB:ENSG00000269556"/>
<dbReference type="eggNOG" id="KOG3879">
    <property type="taxonomic scope" value="Eukaryota"/>
</dbReference>
<dbReference type="GeneTree" id="ENSGT00940000158388"/>
<dbReference type="HOGENOM" id="CLU_053027_0_0_1"/>
<dbReference type="InParanoid" id="Q8NFB2"/>
<dbReference type="OMA" id="HEFGKHD"/>
<dbReference type="OrthoDB" id="72976at2759"/>
<dbReference type="PAN-GO" id="Q8NFB2">
    <property type="GO annotations" value="1 GO annotation based on evolutionary models"/>
</dbReference>
<dbReference type="PhylomeDB" id="Q8NFB2"/>
<dbReference type="TreeFam" id="TF313829"/>
<dbReference type="PathwayCommons" id="Q8NFB2"/>
<dbReference type="SignaLink" id="Q8NFB2"/>
<dbReference type="BioGRID-ORCS" id="84548">
    <property type="hits" value="11 hits in 774 CRISPR screens"/>
</dbReference>
<dbReference type="ChiTaRS" id="TMEM185A">
    <property type="organism name" value="human"/>
</dbReference>
<dbReference type="GenomeRNAi" id="84548"/>
<dbReference type="Pharos" id="Q8NFB2">
    <property type="development level" value="Tdark"/>
</dbReference>
<dbReference type="PRO" id="PR:Q8NFB2"/>
<dbReference type="Proteomes" id="UP000005640">
    <property type="component" value="Chromosome X"/>
</dbReference>
<dbReference type="RNAct" id="Q8NFB2">
    <property type="molecule type" value="protein"/>
</dbReference>
<dbReference type="Bgee" id="ENSG00000269556">
    <property type="expression patterns" value="Expressed in right atrium auricular region and 134 other cell types or tissues"/>
</dbReference>
<dbReference type="ExpressionAtlas" id="Q8NFB2">
    <property type="expression patterns" value="baseline and differential"/>
</dbReference>
<dbReference type="GO" id="GO:0030425">
    <property type="term" value="C:dendrite"/>
    <property type="evidence" value="ECO:0000250"/>
    <property type="project" value="UniProtKB"/>
</dbReference>
<dbReference type="GO" id="GO:0016020">
    <property type="term" value="C:membrane"/>
    <property type="evidence" value="ECO:0007669"/>
    <property type="project" value="UniProtKB-SubCell"/>
</dbReference>
<dbReference type="InterPro" id="IPR019396">
    <property type="entry name" value="TM_Fragile-X-F-assoc"/>
</dbReference>
<dbReference type="PANTHER" id="PTHR13568">
    <property type="entry name" value="FAM11A, B PROTEIN"/>
    <property type="match status" value="1"/>
</dbReference>
<dbReference type="PANTHER" id="PTHR13568:SF2">
    <property type="entry name" value="TRANSMEMBRANE PROTEIN 185A"/>
    <property type="match status" value="1"/>
</dbReference>
<dbReference type="Pfam" id="PF10269">
    <property type="entry name" value="Tmemb_185A"/>
    <property type="match status" value="1"/>
</dbReference>
<name>T185A_HUMAN</name>
<accession>Q8NFB2</accession>
<accession>B3KTZ3</accession>
<accession>Q3SYH1</accession>
<accession>Q96CW3</accession>
<accession>Q96KE8</accession>
<sequence>MNLRGLFQDFNPSKFLIYACLLLFSVLLALRLDGIIQWSYWAVFAPIWLWKLMVIVGASVGTGVWARNPQYRAEGETCVEFKAMLIAVGIHLLLLMFEVLVCDRIERGSHFWLLVFMPLFFVSPVSVAACVWGFRHDRSLELEILCSVNILQFIFIALRLDKIIHWPWLVVCVPLWILMSFLCLVVLYYIVWSVLFLRSMDVIAEQRRTHITMALSWMTIVVPLLTFEILLVHKLDGHNAFSCIPIFVPLWLSLITLMATTFGQKGGNHWWFGIRKDFCQFLLEIFPFLREYGNISYDLHHEDNEETEETPVPEPPKIAPMFRKKARVVITQSPGKYVLPPPKLNIEMPD</sequence>
<evidence type="ECO:0000250" key="1"/>
<evidence type="ECO:0000255" key="2"/>
<evidence type="ECO:0000269" key="3">
    <source>
    </source>
</evidence>
<evidence type="ECO:0000305" key="4"/>
<keyword id="KW-0966">Cell projection</keyword>
<keyword id="KW-0472">Membrane</keyword>
<keyword id="KW-1267">Proteomics identification</keyword>
<keyword id="KW-1185">Reference proteome</keyword>
<keyword id="KW-0812">Transmembrane</keyword>
<keyword id="KW-1133">Transmembrane helix</keyword>